<dbReference type="EMBL" id="CP000407">
    <property type="protein sequence ID" value="ABP89047.1"/>
    <property type="status" value="ALT_INIT"/>
    <property type="molecule type" value="Genomic_DNA"/>
</dbReference>
<dbReference type="SMR" id="A4VSF8"/>
<dbReference type="STRING" id="391295.SSU05_0075"/>
<dbReference type="KEGG" id="ssu:SSU05_0075"/>
<dbReference type="eggNOG" id="COG0185">
    <property type="taxonomic scope" value="Bacteria"/>
</dbReference>
<dbReference type="HOGENOM" id="CLU_144911_0_0_9"/>
<dbReference type="GO" id="GO:0005737">
    <property type="term" value="C:cytoplasm"/>
    <property type="evidence" value="ECO:0007669"/>
    <property type="project" value="UniProtKB-ARBA"/>
</dbReference>
<dbReference type="GO" id="GO:0015935">
    <property type="term" value="C:small ribosomal subunit"/>
    <property type="evidence" value="ECO:0007669"/>
    <property type="project" value="InterPro"/>
</dbReference>
<dbReference type="GO" id="GO:0019843">
    <property type="term" value="F:rRNA binding"/>
    <property type="evidence" value="ECO:0007669"/>
    <property type="project" value="UniProtKB-UniRule"/>
</dbReference>
<dbReference type="GO" id="GO:0003735">
    <property type="term" value="F:structural constituent of ribosome"/>
    <property type="evidence" value="ECO:0007669"/>
    <property type="project" value="InterPro"/>
</dbReference>
<dbReference type="GO" id="GO:0000028">
    <property type="term" value="P:ribosomal small subunit assembly"/>
    <property type="evidence" value="ECO:0007669"/>
    <property type="project" value="TreeGrafter"/>
</dbReference>
<dbReference type="GO" id="GO:0006412">
    <property type="term" value="P:translation"/>
    <property type="evidence" value="ECO:0007669"/>
    <property type="project" value="UniProtKB-UniRule"/>
</dbReference>
<dbReference type="FunFam" id="3.30.860.10:FF:000001">
    <property type="entry name" value="30S ribosomal protein S19"/>
    <property type="match status" value="1"/>
</dbReference>
<dbReference type="Gene3D" id="3.30.860.10">
    <property type="entry name" value="30s Ribosomal Protein S19, Chain A"/>
    <property type="match status" value="1"/>
</dbReference>
<dbReference type="HAMAP" id="MF_00531">
    <property type="entry name" value="Ribosomal_uS19"/>
    <property type="match status" value="1"/>
</dbReference>
<dbReference type="InterPro" id="IPR002222">
    <property type="entry name" value="Ribosomal_uS19"/>
</dbReference>
<dbReference type="InterPro" id="IPR005732">
    <property type="entry name" value="Ribosomal_uS19_bac-type"/>
</dbReference>
<dbReference type="InterPro" id="IPR020934">
    <property type="entry name" value="Ribosomal_uS19_CS"/>
</dbReference>
<dbReference type="InterPro" id="IPR023575">
    <property type="entry name" value="Ribosomal_uS19_SF"/>
</dbReference>
<dbReference type="NCBIfam" id="TIGR01050">
    <property type="entry name" value="rpsS_bact"/>
    <property type="match status" value="1"/>
</dbReference>
<dbReference type="PANTHER" id="PTHR11880">
    <property type="entry name" value="RIBOSOMAL PROTEIN S19P FAMILY MEMBER"/>
    <property type="match status" value="1"/>
</dbReference>
<dbReference type="PANTHER" id="PTHR11880:SF8">
    <property type="entry name" value="SMALL RIBOSOMAL SUBUNIT PROTEIN US19M"/>
    <property type="match status" value="1"/>
</dbReference>
<dbReference type="Pfam" id="PF00203">
    <property type="entry name" value="Ribosomal_S19"/>
    <property type="match status" value="1"/>
</dbReference>
<dbReference type="PIRSF" id="PIRSF002144">
    <property type="entry name" value="Ribosomal_S19"/>
    <property type="match status" value="1"/>
</dbReference>
<dbReference type="PRINTS" id="PR00975">
    <property type="entry name" value="RIBOSOMALS19"/>
</dbReference>
<dbReference type="SUPFAM" id="SSF54570">
    <property type="entry name" value="Ribosomal protein S19"/>
    <property type="match status" value="1"/>
</dbReference>
<dbReference type="PROSITE" id="PS00323">
    <property type="entry name" value="RIBOSOMAL_S19"/>
    <property type="match status" value="1"/>
</dbReference>
<reference key="1">
    <citation type="journal article" date="2007" name="PLoS ONE">
        <title>A glimpse of streptococcal toxic shock syndrome from comparative genomics of S. suis 2 Chinese isolates.</title>
        <authorList>
            <person name="Chen C."/>
            <person name="Tang J."/>
            <person name="Dong W."/>
            <person name="Wang C."/>
            <person name="Feng Y."/>
            <person name="Wang J."/>
            <person name="Zheng F."/>
            <person name="Pan X."/>
            <person name="Liu D."/>
            <person name="Li M."/>
            <person name="Song Y."/>
            <person name="Zhu X."/>
            <person name="Sun H."/>
            <person name="Feng T."/>
            <person name="Guo Z."/>
            <person name="Ju A."/>
            <person name="Ge J."/>
            <person name="Dong Y."/>
            <person name="Sun W."/>
            <person name="Jiang Y."/>
            <person name="Wang J."/>
            <person name="Yan J."/>
            <person name="Yang H."/>
            <person name="Wang X."/>
            <person name="Gao G.F."/>
            <person name="Yang R."/>
            <person name="Wang J."/>
            <person name="Yu J."/>
        </authorList>
    </citation>
    <scope>NUCLEOTIDE SEQUENCE [LARGE SCALE GENOMIC DNA]</scope>
    <source>
        <strain>05ZYH33</strain>
    </source>
</reference>
<protein>
    <recommendedName>
        <fullName evidence="1">Small ribosomal subunit protein uS19</fullName>
    </recommendedName>
    <alternativeName>
        <fullName evidence="2">30S ribosomal protein S19</fullName>
    </alternativeName>
</protein>
<comment type="function">
    <text evidence="1">Protein S19 forms a complex with S13 that binds strongly to the 16S ribosomal RNA.</text>
</comment>
<comment type="similarity">
    <text evidence="1">Belongs to the universal ribosomal protein uS19 family.</text>
</comment>
<comment type="sequence caution" evidence="2">
    <conflict type="erroneous initiation">
        <sequence resource="EMBL-CDS" id="ABP89047"/>
    </conflict>
</comment>
<sequence length="93" mass="10750">MGRSLKKGPFVDEHLMKKVEAQANDEKKKVIKTWSRRSTIFPSFIGYTIAVYDGRKHVPVYIQEDMVGHKLGEFAPTRTYKGHAADDKKTRRK</sequence>
<proteinExistence type="inferred from homology"/>
<keyword id="KW-0687">Ribonucleoprotein</keyword>
<keyword id="KW-0689">Ribosomal protein</keyword>
<keyword id="KW-0694">RNA-binding</keyword>
<keyword id="KW-0699">rRNA-binding</keyword>
<organism>
    <name type="scientific">Streptococcus suis (strain 05ZYH33)</name>
    <dbReference type="NCBI Taxonomy" id="391295"/>
    <lineage>
        <taxon>Bacteria</taxon>
        <taxon>Bacillati</taxon>
        <taxon>Bacillota</taxon>
        <taxon>Bacilli</taxon>
        <taxon>Lactobacillales</taxon>
        <taxon>Streptococcaceae</taxon>
        <taxon>Streptococcus</taxon>
    </lineage>
</organism>
<gene>
    <name evidence="1" type="primary">rpsS</name>
    <name type="ordered locus">SSU05_0075</name>
</gene>
<evidence type="ECO:0000255" key="1">
    <source>
        <dbReference type="HAMAP-Rule" id="MF_00531"/>
    </source>
</evidence>
<evidence type="ECO:0000305" key="2"/>
<name>RS19_STRSY</name>
<feature type="chain" id="PRO_0000354302" description="Small ribosomal subunit protein uS19">
    <location>
        <begin position="1"/>
        <end position="93"/>
    </location>
</feature>
<accession>A4VSF8</accession>